<gene>
    <name type="primary">rfbF</name>
    <name type="ordered locus">STY2302</name>
    <name type="ordered locus">t0780</name>
</gene>
<feature type="chain" id="PRO_0000389446" description="Glucose-1-phosphate cytidylyltransferase">
    <location>
        <begin position="1"/>
        <end position="257"/>
    </location>
</feature>
<feature type="binding site">
    <location>
        <begin position="6"/>
        <end position="10"/>
    </location>
    <ligand>
        <name>substrate</name>
    </ligand>
</feature>
<feature type="binding site">
    <location>
        <begin position="11"/>
        <end position="13"/>
    </location>
    <ligand>
        <name>substrate</name>
    </ligand>
</feature>
<feature type="binding site" evidence="1 2">
    <location>
        <position position="23"/>
    </location>
    <ligand>
        <name>substrate</name>
    </ligand>
</feature>
<feature type="binding site" evidence="1 2">
    <location>
        <position position="104"/>
    </location>
    <ligand>
        <name>substrate</name>
    </ligand>
</feature>
<feature type="binding site" evidence="1 2">
    <location>
        <position position="109"/>
    </location>
    <ligand>
        <name>substrate</name>
    </ligand>
</feature>
<feature type="binding site" evidence="1 2">
    <location>
        <position position="128"/>
    </location>
    <ligand>
        <name>substrate</name>
    </ligand>
</feature>
<feature type="binding site" evidence="2">
    <location>
        <position position="129"/>
    </location>
    <ligand>
        <name>Mg(2+)</name>
        <dbReference type="ChEBI" id="CHEBI:18420"/>
    </ligand>
</feature>
<feature type="binding site" evidence="2">
    <location>
        <position position="234"/>
    </location>
    <ligand>
        <name>Mg(2+)</name>
        <dbReference type="ChEBI" id="CHEBI:18420"/>
    </ligand>
</feature>
<feature type="strand" evidence="4">
    <location>
        <begin position="2"/>
        <end position="7"/>
    </location>
</feature>
<feature type="helix" evidence="5">
    <location>
        <begin position="12"/>
        <end position="14"/>
    </location>
</feature>
<feature type="helix" evidence="5">
    <location>
        <begin position="15"/>
        <end position="18"/>
    </location>
</feature>
<feature type="helix" evidence="4">
    <location>
        <begin position="23"/>
        <end position="25"/>
    </location>
</feature>
<feature type="helix" evidence="4">
    <location>
        <begin position="33"/>
        <end position="43"/>
    </location>
</feature>
<feature type="strand" evidence="4">
    <location>
        <begin position="48"/>
        <end position="53"/>
    </location>
</feature>
<feature type="helix" evidence="4">
    <location>
        <begin position="57"/>
        <end position="65"/>
    </location>
</feature>
<feature type="helix" evidence="4">
    <location>
        <begin position="67"/>
        <end position="71"/>
    </location>
</feature>
<feature type="strand" evidence="4">
    <location>
        <begin position="74"/>
        <end position="77"/>
    </location>
</feature>
<feature type="helix" evidence="4">
    <location>
        <begin position="78"/>
        <end position="80"/>
    </location>
</feature>
<feature type="strand" evidence="4">
    <location>
        <begin position="82"/>
        <end position="85"/>
    </location>
</feature>
<feature type="strand" evidence="4">
    <location>
        <begin position="94"/>
        <end position="99"/>
    </location>
</feature>
<feature type="helix" evidence="4">
    <location>
        <begin position="106"/>
        <end position="112"/>
    </location>
</feature>
<feature type="helix" evidence="4">
    <location>
        <begin position="113"/>
        <end position="116"/>
    </location>
</feature>
<feature type="turn" evidence="4">
    <location>
        <begin position="117"/>
        <end position="119"/>
    </location>
</feature>
<feature type="strand" evidence="4">
    <location>
        <begin position="123"/>
        <end position="127"/>
    </location>
</feature>
<feature type="strand" evidence="4">
    <location>
        <begin position="130"/>
        <end position="132"/>
    </location>
</feature>
<feature type="helix" evidence="4">
    <location>
        <begin position="136"/>
        <end position="146"/>
    </location>
</feature>
<feature type="strand" evidence="4">
    <location>
        <begin position="149"/>
        <end position="155"/>
    </location>
</feature>
<feature type="strand" evidence="4">
    <location>
        <begin position="161"/>
        <end position="167"/>
    </location>
</feature>
<feature type="strand" evidence="4">
    <location>
        <begin position="170"/>
        <end position="177"/>
    </location>
</feature>
<feature type="strand" evidence="4">
    <location>
        <begin position="190"/>
        <end position="192"/>
    </location>
</feature>
<feature type="helix" evidence="4">
    <location>
        <begin position="194"/>
        <end position="199"/>
    </location>
</feature>
<feature type="turn" evidence="4">
    <location>
        <begin position="207"/>
        <end position="209"/>
    </location>
</feature>
<feature type="helix" evidence="4">
    <location>
        <begin position="210"/>
        <end position="217"/>
    </location>
</feature>
<feature type="strand" evidence="4">
    <location>
        <begin position="221"/>
        <end position="226"/>
    </location>
</feature>
<feature type="strand" evidence="4">
    <location>
        <begin position="230"/>
        <end position="232"/>
    </location>
</feature>
<feature type="helix" evidence="4">
    <location>
        <begin position="236"/>
        <end position="247"/>
    </location>
</feature>
<comment type="function">
    <text evidence="2">Involved in the biosynthesis of the tyvelose, a 3,6-dideoxyhexose found in the O-antigen of the surface lipopolysaccharides. It catalyzes the transfer of a CMP moiety from CTP to glucose 1-phosphate. This enzyme can utilize either CTP or UTP as the nucleotide donor.</text>
</comment>
<comment type="catalytic activity">
    <reaction evidence="2">
        <text>alpha-D-glucose 1-phosphate + CTP + H(+) = CDP-D-glucose + diphosphate</text>
        <dbReference type="Rhea" id="RHEA:18213"/>
        <dbReference type="ChEBI" id="CHEBI:15378"/>
        <dbReference type="ChEBI" id="CHEBI:33019"/>
        <dbReference type="ChEBI" id="CHEBI:37563"/>
        <dbReference type="ChEBI" id="CHEBI:58601"/>
        <dbReference type="ChEBI" id="CHEBI:58660"/>
        <dbReference type="EC" id="2.7.7.33"/>
    </reaction>
</comment>
<comment type="cofactor">
    <cofactor>
        <name>Mg(2+)</name>
        <dbReference type="ChEBI" id="CHEBI:18420"/>
    </cofactor>
    <text>Binds 1 Mg(2+) ion per subunit.</text>
</comment>
<comment type="biophysicochemical properties">
    <kinetics>
        <KM evidence="2">11 uM for CTP-glucose (at pH 8)</KM>
        <KM evidence="2">52 uM for glucose 1-phosphate (at pH 8)</KM>
        <KM evidence="2">67 uM for pyrophosphate (at pH 8)</KM>
        <KM evidence="2">148 uM for CTP (at pH 8)</KM>
        <KM evidence="2">159 uM for UTP (at pH 8)</KM>
        <KM evidence="2">2535 uM for UTP-glucose</KM>
        <KM evidence="2">3000 uM for dCTP (at pH 8)</KM>
        <KM evidence="2">3600 uM for xylose 1-phosphate (at pH 8)</KM>
        <Vmax evidence="2">15.4 umol/min/mg enzyme toward UTP (at pH 8)</Vmax>
        <Vmax evidence="2">110.4 umol/min/mg enzyme toward CTP (at pH 8)</Vmax>
    </kinetics>
</comment>
<comment type="pathway">
    <text>Nucleotide-sugar biosynthesis; CDP-3,6-dideoxy-D-mannose biosynthesis; CDP-3,6-dideoxy-D-mannose from CTP and alpha-D-glucose 1-phosphate: step 1/5.</text>
</comment>
<comment type="pathway">
    <text>Bacterial outer membrane biogenesis; LPS O-antigen biosynthesis.</text>
</comment>
<comment type="subunit">
    <text evidence="1 2">Homohexamer.</text>
</comment>
<comment type="miscellaneous">
    <text>Catalysis proceeds via a sequential rather than a ping-pong bi-bi reaction mechanism.</text>
</comment>
<comment type="similarity">
    <text evidence="3">Belongs to the glucose-1-phosphate cytidylyltransferase family.</text>
</comment>
<protein>
    <recommendedName>
        <fullName>Glucose-1-phosphate cytidylyltransferase</fullName>
        <ecNumber>2.7.7.33</ecNumber>
    </recommendedName>
    <alternativeName>
        <fullName>CDP-glucose pyrophosphorylase</fullName>
    </alternativeName>
</protein>
<evidence type="ECO:0000269" key="1">
    <source>
    </source>
</evidence>
<evidence type="ECO:0000269" key="2">
    <source>
    </source>
</evidence>
<evidence type="ECO:0000305" key="3"/>
<evidence type="ECO:0007829" key="4">
    <source>
        <dbReference type="PDB" id="1TZF"/>
    </source>
</evidence>
<evidence type="ECO:0007829" key="5">
    <source>
        <dbReference type="PDB" id="1WVC"/>
    </source>
</evidence>
<accession>Q8Z5I4</accession>
<accession>Q7CAW4</accession>
<reference key="1">
    <citation type="journal article" date="2001" name="Nature">
        <title>Complete genome sequence of a multiple drug resistant Salmonella enterica serovar Typhi CT18.</title>
        <authorList>
            <person name="Parkhill J."/>
            <person name="Dougan G."/>
            <person name="James K.D."/>
            <person name="Thomson N.R."/>
            <person name="Pickard D."/>
            <person name="Wain J."/>
            <person name="Churcher C.M."/>
            <person name="Mungall K.L."/>
            <person name="Bentley S.D."/>
            <person name="Holden M.T.G."/>
            <person name="Sebaihia M."/>
            <person name="Baker S."/>
            <person name="Basham D."/>
            <person name="Brooks K."/>
            <person name="Chillingworth T."/>
            <person name="Connerton P."/>
            <person name="Cronin A."/>
            <person name="Davis P."/>
            <person name="Davies R.M."/>
            <person name="Dowd L."/>
            <person name="White N."/>
            <person name="Farrar J."/>
            <person name="Feltwell T."/>
            <person name="Hamlin N."/>
            <person name="Haque A."/>
            <person name="Hien T.T."/>
            <person name="Holroyd S."/>
            <person name="Jagels K."/>
            <person name="Krogh A."/>
            <person name="Larsen T.S."/>
            <person name="Leather S."/>
            <person name="Moule S."/>
            <person name="O'Gaora P."/>
            <person name="Parry C."/>
            <person name="Quail M.A."/>
            <person name="Rutherford K.M."/>
            <person name="Simmonds M."/>
            <person name="Skelton J."/>
            <person name="Stevens K."/>
            <person name="Whitehead S."/>
            <person name="Barrell B.G."/>
        </authorList>
    </citation>
    <scope>NUCLEOTIDE SEQUENCE [LARGE SCALE GENOMIC DNA]</scope>
    <source>
        <strain>CT18</strain>
    </source>
</reference>
<reference key="2">
    <citation type="journal article" date="2003" name="J. Bacteriol.">
        <title>Comparative genomics of Salmonella enterica serovar Typhi strains Ty2 and CT18.</title>
        <authorList>
            <person name="Deng W."/>
            <person name="Liou S.-R."/>
            <person name="Plunkett G. III"/>
            <person name="Mayhew G.F."/>
            <person name="Rose D.J."/>
            <person name="Burland V."/>
            <person name="Kodoyianni V."/>
            <person name="Schwartz D.C."/>
            <person name="Blattner F.R."/>
        </authorList>
    </citation>
    <scope>NUCLEOTIDE SEQUENCE [LARGE SCALE GENOMIC DNA]</scope>
    <source>
        <strain>ATCC 700931 / Ty2</strain>
    </source>
</reference>
<reference key="3">
    <citation type="journal article" date="2004" name="J. Biol. Chem.">
        <title>Molecular structure of alpha-D-glucose-1-phosphate cytidylyltransferase from Salmonella typhi.</title>
        <authorList>
            <person name="Koropatkin N.M."/>
            <person name="Holden H.M."/>
        </authorList>
    </citation>
    <scope>X-RAY CRYSTALLOGRAPHY (2.1 ANGSTROMS) OF 2-257 IN COMPLEX WITH SUBSTRATE</scope>
    <scope>SUBUNIT</scope>
    <source>
        <strain>CT18</strain>
    </source>
</reference>
<reference key="4">
    <citation type="journal article" date="2005" name="J. Biol. Chem.">
        <title>Kinetic and structural analysis of alpha-D-Glucose-1-phosphate cytidylyltransferase from Salmonella typhi.</title>
        <authorList>
            <person name="Koropatkin N.M."/>
            <person name="Cleland W.W."/>
            <person name="Holden H.M."/>
        </authorList>
    </citation>
    <scope>X-RAY CRYSTALLOGRAPHY (2.5 ANGSTROMS) OF 2-257 IN COMPLEX WITH MAGNESIUM AND SUBSTRATE</scope>
    <scope>CATALYTIC ACTIVITY</scope>
    <scope>BIOPHYSICOCHEMICAL PROPERTIES</scope>
    <scope>SUBSTRATE SPECIFICITY</scope>
    <scope>REACTION MECHANISM</scope>
    <scope>SUBUNIT</scope>
    <scope>FUNCTION</scope>
    <source>
        <strain>CT18</strain>
    </source>
</reference>
<keyword id="KW-0002">3D-structure</keyword>
<keyword id="KW-0448">Lipopolysaccharide biosynthesis</keyword>
<keyword id="KW-0460">Magnesium</keyword>
<keyword id="KW-0479">Metal-binding</keyword>
<keyword id="KW-0547">Nucleotide-binding</keyword>
<keyword id="KW-0548">Nucleotidyltransferase</keyword>
<keyword id="KW-0808">Transferase</keyword>
<organism>
    <name type="scientific">Salmonella typhi</name>
    <dbReference type="NCBI Taxonomy" id="90370"/>
    <lineage>
        <taxon>Bacteria</taxon>
        <taxon>Pseudomonadati</taxon>
        <taxon>Pseudomonadota</taxon>
        <taxon>Gammaproteobacteria</taxon>
        <taxon>Enterobacterales</taxon>
        <taxon>Enterobacteriaceae</taxon>
        <taxon>Salmonella</taxon>
    </lineage>
</organism>
<name>RFBF_SALTI</name>
<proteinExistence type="evidence at protein level"/>
<dbReference type="EC" id="2.7.7.33"/>
<dbReference type="EMBL" id="AE014613">
    <property type="protein sequence ID" value="AAO68471.1"/>
    <property type="molecule type" value="Genomic_DNA"/>
</dbReference>
<dbReference type="EMBL" id="AL513382">
    <property type="protein sequence ID" value="CAD02455.1"/>
    <property type="molecule type" value="Genomic_DNA"/>
</dbReference>
<dbReference type="RefSeq" id="NP_456641.1">
    <property type="nucleotide sequence ID" value="NC_003198.1"/>
</dbReference>
<dbReference type="RefSeq" id="WP_000648783.1">
    <property type="nucleotide sequence ID" value="NZ_WSUR01000002.1"/>
</dbReference>
<dbReference type="PDB" id="1TZF">
    <property type="method" value="X-ray"/>
    <property type="resolution" value="2.10 A"/>
    <property type="chains" value="A=2-257"/>
</dbReference>
<dbReference type="PDB" id="1WVC">
    <property type="method" value="X-ray"/>
    <property type="resolution" value="2.50 A"/>
    <property type="chains" value="A=2-257"/>
</dbReference>
<dbReference type="PDBsum" id="1TZF"/>
<dbReference type="PDBsum" id="1WVC"/>
<dbReference type="SMR" id="Q8Z5I4"/>
<dbReference type="STRING" id="220341.gene:17586210"/>
<dbReference type="BindingDB" id="Q8Z5I4"/>
<dbReference type="ChEMBL" id="CHEMBL3745591"/>
<dbReference type="KEGG" id="stt:t0780"/>
<dbReference type="KEGG" id="sty:STY2302"/>
<dbReference type="PATRIC" id="fig|220341.7.peg.2322"/>
<dbReference type="eggNOG" id="COG1208">
    <property type="taxonomic scope" value="Bacteria"/>
</dbReference>
<dbReference type="HOGENOM" id="CLU_029499_10_0_6"/>
<dbReference type="OMA" id="YWRAIDT"/>
<dbReference type="OrthoDB" id="9788272at2"/>
<dbReference type="SABIO-RK" id="Q8Z5I4"/>
<dbReference type="UniPathway" id="UPA00055">
    <property type="reaction ID" value="UER00511"/>
</dbReference>
<dbReference type="UniPathway" id="UPA00281"/>
<dbReference type="EvolutionaryTrace" id="Q8Z5I4"/>
<dbReference type="Proteomes" id="UP000000541">
    <property type="component" value="Chromosome"/>
</dbReference>
<dbReference type="Proteomes" id="UP000002670">
    <property type="component" value="Chromosome"/>
</dbReference>
<dbReference type="GO" id="GO:0047343">
    <property type="term" value="F:glucose-1-phosphate cytidylyltransferase activity"/>
    <property type="evidence" value="ECO:0007669"/>
    <property type="project" value="UniProtKB-EC"/>
</dbReference>
<dbReference type="GO" id="GO:0046872">
    <property type="term" value="F:metal ion binding"/>
    <property type="evidence" value="ECO:0007669"/>
    <property type="project" value="UniProtKB-KW"/>
</dbReference>
<dbReference type="GO" id="GO:0000166">
    <property type="term" value="F:nucleotide binding"/>
    <property type="evidence" value="ECO:0007669"/>
    <property type="project" value="UniProtKB-KW"/>
</dbReference>
<dbReference type="GO" id="GO:0009243">
    <property type="term" value="P:O antigen biosynthetic process"/>
    <property type="evidence" value="ECO:0007669"/>
    <property type="project" value="UniProtKB-UniPathway"/>
</dbReference>
<dbReference type="CDD" id="cd02524">
    <property type="entry name" value="G1P_cytidylyltransferase"/>
    <property type="match status" value="1"/>
</dbReference>
<dbReference type="Gene3D" id="3.90.550.10">
    <property type="entry name" value="Spore Coat Polysaccharide Biosynthesis Protein SpsA, Chain A"/>
    <property type="match status" value="1"/>
</dbReference>
<dbReference type="InterPro" id="IPR046981">
    <property type="entry name" value="G1P_cyt_trans"/>
</dbReference>
<dbReference type="InterPro" id="IPR013446">
    <property type="entry name" value="G1P_cyt_trans-like"/>
</dbReference>
<dbReference type="InterPro" id="IPR005835">
    <property type="entry name" value="NTP_transferase_dom"/>
</dbReference>
<dbReference type="InterPro" id="IPR029044">
    <property type="entry name" value="Nucleotide-diphossugar_trans"/>
</dbReference>
<dbReference type="NCBIfam" id="TIGR02623">
    <property type="entry name" value="G1P_cyt_trans"/>
    <property type="match status" value="1"/>
</dbReference>
<dbReference type="PANTHER" id="PTHR47183:SF1">
    <property type="entry name" value="GLUCOSE-1-PHOSPHATE CYTIDYLYLTRANSFERASE"/>
    <property type="match status" value="1"/>
</dbReference>
<dbReference type="PANTHER" id="PTHR47183">
    <property type="entry name" value="GLUCOSE-1-PHOSPHATE CYTIDYLYLTRANSFERASE-RELATED"/>
    <property type="match status" value="1"/>
</dbReference>
<dbReference type="Pfam" id="PF00483">
    <property type="entry name" value="NTP_transferase"/>
    <property type="match status" value="1"/>
</dbReference>
<dbReference type="SUPFAM" id="SSF53448">
    <property type="entry name" value="Nucleotide-diphospho-sugar transferases"/>
    <property type="match status" value="1"/>
</dbReference>
<sequence>MKAVILAGGLGTRLSEETIVKPKPMVEIGGKPILWHIMKMYSVHGIKDFIICCGYKGYVIKEYFANYFLHMSDVTFHMAENRMEVHHKRVEPWNVTLVDTGDSSMTGGRLKRVAEYVKDDEAFLFTYGDGVADLDIKATIDFHKAHGKKATLTATFPPGRFGALDIQAGQVRSFQEKPKGDGAMINGGFFVLNPSVIDLIDNDATTWEQEPLMTLAQQGELMAFEHPGFWQPMDTLRDKVYLEGLWEKGKAPWKTWE</sequence>